<protein>
    <recommendedName>
        <fullName evidence="5">Uncharacterized ophiobolin family sesterterpenoid biosynthesis cluster protein</fullName>
    </recommendedName>
</protein>
<proteinExistence type="inferred from homology"/>
<organism>
    <name type="scientific">Aspergillus terreus</name>
    <dbReference type="NCBI Taxonomy" id="33178"/>
    <lineage>
        <taxon>Eukaryota</taxon>
        <taxon>Fungi</taxon>
        <taxon>Dikarya</taxon>
        <taxon>Ascomycota</taxon>
        <taxon>Pezizomycotina</taxon>
        <taxon>Eurotiomycetes</taxon>
        <taxon>Eurotiomycetidae</taxon>
        <taxon>Eurotiales</taxon>
        <taxon>Aspergillaceae</taxon>
        <taxon>Aspergillus</taxon>
        <taxon>Aspergillus subgen. Circumdati</taxon>
    </lineage>
</organism>
<keyword id="KW-0325">Glycoprotein</keyword>
<keyword id="KW-0472">Membrane</keyword>
<keyword id="KW-0812">Transmembrane</keyword>
<keyword id="KW-1133">Transmembrane helix</keyword>
<reference key="1">
    <citation type="journal article" date="2017" name="Nat. Chem. Biol.">
        <title>A scalable platform to identify fungal secondary metabolites and their gene clusters.</title>
        <authorList>
            <person name="Clevenger K.D."/>
            <person name="Bok J.W."/>
            <person name="Ye R."/>
            <person name="Miley G.P."/>
            <person name="Verdan M.H."/>
            <person name="Velk T."/>
            <person name="Chen C."/>
            <person name="Yang K."/>
            <person name="Robey M.T."/>
            <person name="Gao P."/>
            <person name="Lamprecht M."/>
            <person name="Thomas P.M."/>
            <person name="Islam M.N."/>
            <person name="Palmer J.M."/>
            <person name="Wu C.C."/>
            <person name="Keller N.P."/>
            <person name="Kelleher N.L."/>
        </authorList>
    </citation>
    <scope>NUCLEOTIDE SEQUENCE [GENOMIC DNA]</scope>
    <scope>FUNCTION</scope>
    <scope>PATHWAY</scope>
    <source>
        <strain>ATCC 20542 / MF4845</strain>
    </source>
</reference>
<feature type="chain" id="PRO_0000450611" description="Uncharacterized ophiobolin family sesterterpenoid biosynthesis cluster protein">
    <location>
        <begin position="1"/>
        <end position="320"/>
    </location>
</feature>
<feature type="transmembrane region" description="Helical" evidence="1">
    <location>
        <begin position="51"/>
        <end position="71"/>
    </location>
</feature>
<feature type="transmembrane region" description="Helical" evidence="1">
    <location>
        <begin position="186"/>
        <end position="206"/>
    </location>
</feature>
<feature type="transmembrane region" description="Helical" evidence="1">
    <location>
        <begin position="216"/>
        <end position="236"/>
    </location>
</feature>
<feature type="transmembrane region" description="Helical" evidence="1">
    <location>
        <begin position="272"/>
        <end position="292"/>
    </location>
</feature>
<feature type="region of interest" description="Disordered" evidence="3">
    <location>
        <begin position="1"/>
        <end position="40"/>
    </location>
</feature>
<feature type="compositionally biased region" description="Basic residues" evidence="3">
    <location>
        <begin position="10"/>
        <end position="35"/>
    </location>
</feature>
<feature type="glycosylation site" description="N-linked (GlcNAc...) asparagine" evidence="2">
    <location>
        <position position="92"/>
    </location>
</feature>
<feature type="glycosylation site" description="N-linked (GlcNAc...) asparagine" evidence="2">
    <location>
        <position position="122"/>
    </location>
</feature>
<feature type="glycosylation site" description="N-linked (GlcNAc...) asparagine" evidence="2">
    <location>
        <position position="154"/>
    </location>
</feature>
<feature type="glycosylation site" description="N-linked (GlcNAc...) asparagine" evidence="2">
    <location>
        <position position="167"/>
    </location>
</feature>
<feature type="glycosylation site" description="N-linked (GlcNAc...) asparagine" evidence="2">
    <location>
        <position position="247"/>
    </location>
</feature>
<sequence length="320" mass="34422">MDHPSTSSLPRKKVKAGVKKAGKKTGKKTTGKKKTTPSAIGNRKGKGAACLLVLLAVLSYLAALSLGLYIMTGCISTTAQSNNIYLAELSTNTTYDMSLRVGYFGGCVSVTELTEAPYTGRNSSTQTSTHCVSNLRRKNLDDLSEDLWEPLKLNSSTIQSSLQTFFNTTLPQAKHLQENVFFCEPPLVHLLLFFVTGIMLFVAMTGTSRKRSYRAMLVTAIALSAFSLALALVTVLGSLQSMNALLNTSASGAQRALGDSLYISRGKAMLGVQGALVAIVAVFYLTMGVVFVRRTPEGGAGYIIQAFQNVRGPLKRMGRR</sequence>
<accession>P9WEV5</accession>
<comment type="function">
    <text evidence="4">Part of the gene cluster that mediates the biosynthesis of an ophiobolin family sesterterpenoid.</text>
</comment>
<comment type="pathway">
    <text evidence="6">Secondary metabolite biosynthesis; terpenoid biosynthesis.</text>
</comment>
<comment type="subcellular location">
    <subcellularLocation>
        <location evidence="1">Membrane</location>
        <topology evidence="1">Multi-pass membrane protein</topology>
    </subcellularLocation>
</comment>
<evidence type="ECO:0000255" key="1"/>
<evidence type="ECO:0000255" key="2">
    <source>
        <dbReference type="PROSITE-ProRule" id="PRU00498"/>
    </source>
</evidence>
<evidence type="ECO:0000256" key="3">
    <source>
        <dbReference type="SAM" id="MobiDB-lite"/>
    </source>
</evidence>
<evidence type="ECO:0000269" key="4">
    <source>
    </source>
</evidence>
<evidence type="ECO:0000303" key="5">
    <source>
    </source>
</evidence>
<evidence type="ECO:0000305" key="6">
    <source>
    </source>
</evidence>
<dbReference type="EMBL" id="KX449366">
    <property type="protein sequence ID" value="AQM58279.1"/>
    <property type="molecule type" value="Genomic_DNA"/>
</dbReference>
<dbReference type="VEuPathDB" id="FungiDB:ATEG_03566"/>
<dbReference type="UniPathway" id="UPA00213"/>
<dbReference type="GO" id="GO:0016020">
    <property type="term" value="C:membrane"/>
    <property type="evidence" value="ECO:0007669"/>
    <property type="project" value="UniProtKB-SubCell"/>
</dbReference>
<dbReference type="GO" id="GO:0016114">
    <property type="term" value="P:terpenoid biosynthetic process"/>
    <property type="evidence" value="ECO:0007669"/>
    <property type="project" value="UniProtKB-UniPathway"/>
</dbReference>
<dbReference type="InterPro" id="IPR033481">
    <property type="entry name" value="Dni1/Fig1"/>
</dbReference>
<dbReference type="Pfam" id="PF12351">
    <property type="entry name" value="Fig1"/>
    <property type="match status" value="1"/>
</dbReference>
<name>STTD_ASPTE</name>